<dbReference type="EC" id="1.17.7.4" evidence="1"/>
<dbReference type="EMBL" id="AM421808">
    <property type="protein sequence ID" value="CAM09694.1"/>
    <property type="molecule type" value="Genomic_DNA"/>
</dbReference>
<dbReference type="RefSeq" id="WP_002221497.1">
    <property type="nucleotide sequence ID" value="NC_008767.1"/>
</dbReference>
<dbReference type="SMR" id="A1KS64"/>
<dbReference type="GeneID" id="93386737"/>
<dbReference type="KEGG" id="nmc:NMC0385"/>
<dbReference type="HOGENOM" id="CLU_027486_1_1_4"/>
<dbReference type="UniPathway" id="UPA00056">
    <property type="reaction ID" value="UER00097"/>
</dbReference>
<dbReference type="UniPathway" id="UPA00059">
    <property type="reaction ID" value="UER00105"/>
</dbReference>
<dbReference type="Proteomes" id="UP000002286">
    <property type="component" value="Chromosome"/>
</dbReference>
<dbReference type="GO" id="GO:0051539">
    <property type="term" value="F:4 iron, 4 sulfur cluster binding"/>
    <property type="evidence" value="ECO:0007669"/>
    <property type="project" value="UniProtKB-UniRule"/>
</dbReference>
<dbReference type="GO" id="GO:0051745">
    <property type="term" value="F:4-hydroxy-3-methylbut-2-enyl diphosphate reductase activity"/>
    <property type="evidence" value="ECO:0007669"/>
    <property type="project" value="UniProtKB-UniRule"/>
</dbReference>
<dbReference type="GO" id="GO:0046872">
    <property type="term" value="F:metal ion binding"/>
    <property type="evidence" value="ECO:0007669"/>
    <property type="project" value="UniProtKB-KW"/>
</dbReference>
<dbReference type="GO" id="GO:0050992">
    <property type="term" value="P:dimethylallyl diphosphate biosynthetic process"/>
    <property type="evidence" value="ECO:0007669"/>
    <property type="project" value="UniProtKB-UniRule"/>
</dbReference>
<dbReference type="GO" id="GO:0019288">
    <property type="term" value="P:isopentenyl diphosphate biosynthetic process, methylerythritol 4-phosphate pathway"/>
    <property type="evidence" value="ECO:0007669"/>
    <property type="project" value="UniProtKB-UniRule"/>
</dbReference>
<dbReference type="GO" id="GO:0016114">
    <property type="term" value="P:terpenoid biosynthetic process"/>
    <property type="evidence" value="ECO:0007669"/>
    <property type="project" value="UniProtKB-UniRule"/>
</dbReference>
<dbReference type="CDD" id="cd13944">
    <property type="entry name" value="lytB_ispH"/>
    <property type="match status" value="1"/>
</dbReference>
<dbReference type="Gene3D" id="3.40.50.11270">
    <property type="match status" value="1"/>
</dbReference>
<dbReference type="Gene3D" id="3.40.1010.20">
    <property type="entry name" value="4-hydroxy-3-methylbut-2-enyl diphosphate reductase, catalytic domain"/>
    <property type="match status" value="2"/>
</dbReference>
<dbReference type="HAMAP" id="MF_00191">
    <property type="entry name" value="IspH"/>
    <property type="match status" value="1"/>
</dbReference>
<dbReference type="InterPro" id="IPR003451">
    <property type="entry name" value="LytB/IspH"/>
</dbReference>
<dbReference type="NCBIfam" id="TIGR00216">
    <property type="entry name" value="ispH_lytB"/>
    <property type="match status" value="1"/>
</dbReference>
<dbReference type="NCBIfam" id="NF002188">
    <property type="entry name" value="PRK01045.1-2"/>
    <property type="match status" value="1"/>
</dbReference>
<dbReference type="NCBIfam" id="NF002189">
    <property type="entry name" value="PRK01045.1-3"/>
    <property type="match status" value="1"/>
</dbReference>
<dbReference type="NCBIfam" id="NF002190">
    <property type="entry name" value="PRK01045.1-4"/>
    <property type="match status" value="1"/>
</dbReference>
<dbReference type="PANTHER" id="PTHR30426">
    <property type="entry name" value="4-HYDROXY-3-METHYLBUT-2-ENYL DIPHOSPHATE REDUCTASE"/>
    <property type="match status" value="1"/>
</dbReference>
<dbReference type="PANTHER" id="PTHR30426:SF0">
    <property type="entry name" value="4-HYDROXY-3-METHYLBUT-2-ENYL DIPHOSPHATE REDUCTASE"/>
    <property type="match status" value="1"/>
</dbReference>
<dbReference type="Pfam" id="PF02401">
    <property type="entry name" value="LYTB"/>
    <property type="match status" value="1"/>
</dbReference>
<keyword id="KW-0004">4Fe-4S</keyword>
<keyword id="KW-0408">Iron</keyword>
<keyword id="KW-0411">Iron-sulfur</keyword>
<keyword id="KW-0414">Isoprene biosynthesis</keyword>
<keyword id="KW-0479">Metal-binding</keyword>
<keyword id="KW-0560">Oxidoreductase</keyword>
<feature type="chain" id="PRO_1000021142" description="4-hydroxy-3-methylbut-2-enyl diphosphate reductase">
    <location>
        <begin position="1"/>
        <end position="322"/>
    </location>
</feature>
<feature type="active site" description="Proton donor" evidence="1">
    <location>
        <position position="129"/>
    </location>
</feature>
<feature type="binding site" evidence="1">
    <location>
        <position position="15"/>
    </location>
    <ligand>
        <name>[4Fe-4S] cluster</name>
        <dbReference type="ChEBI" id="CHEBI:49883"/>
    </ligand>
</feature>
<feature type="binding site" evidence="1">
    <location>
        <position position="44"/>
    </location>
    <ligand>
        <name>(2E)-4-hydroxy-3-methylbut-2-enyl diphosphate</name>
        <dbReference type="ChEBI" id="CHEBI:128753"/>
    </ligand>
</feature>
<feature type="binding site" evidence="1">
    <location>
        <position position="44"/>
    </location>
    <ligand>
        <name>dimethylallyl diphosphate</name>
        <dbReference type="ChEBI" id="CHEBI:57623"/>
    </ligand>
</feature>
<feature type="binding site" evidence="1">
    <location>
        <position position="44"/>
    </location>
    <ligand>
        <name>isopentenyl diphosphate</name>
        <dbReference type="ChEBI" id="CHEBI:128769"/>
    </ligand>
</feature>
<feature type="binding site" evidence="1">
    <location>
        <position position="77"/>
    </location>
    <ligand>
        <name>(2E)-4-hydroxy-3-methylbut-2-enyl diphosphate</name>
        <dbReference type="ChEBI" id="CHEBI:128753"/>
    </ligand>
</feature>
<feature type="binding site" evidence="1">
    <location>
        <position position="77"/>
    </location>
    <ligand>
        <name>dimethylallyl diphosphate</name>
        <dbReference type="ChEBI" id="CHEBI:57623"/>
    </ligand>
</feature>
<feature type="binding site" evidence="1">
    <location>
        <position position="77"/>
    </location>
    <ligand>
        <name>isopentenyl diphosphate</name>
        <dbReference type="ChEBI" id="CHEBI:128769"/>
    </ligand>
</feature>
<feature type="binding site" evidence="1">
    <location>
        <position position="99"/>
    </location>
    <ligand>
        <name>[4Fe-4S] cluster</name>
        <dbReference type="ChEBI" id="CHEBI:49883"/>
    </ligand>
</feature>
<feature type="binding site" evidence="1">
    <location>
        <position position="127"/>
    </location>
    <ligand>
        <name>(2E)-4-hydroxy-3-methylbut-2-enyl diphosphate</name>
        <dbReference type="ChEBI" id="CHEBI:128753"/>
    </ligand>
</feature>
<feature type="binding site" evidence="1">
    <location>
        <position position="127"/>
    </location>
    <ligand>
        <name>dimethylallyl diphosphate</name>
        <dbReference type="ChEBI" id="CHEBI:57623"/>
    </ligand>
</feature>
<feature type="binding site" evidence="1">
    <location>
        <position position="127"/>
    </location>
    <ligand>
        <name>isopentenyl diphosphate</name>
        <dbReference type="ChEBI" id="CHEBI:128769"/>
    </ligand>
</feature>
<feature type="binding site" evidence="1">
    <location>
        <position position="168"/>
    </location>
    <ligand>
        <name>(2E)-4-hydroxy-3-methylbut-2-enyl diphosphate</name>
        <dbReference type="ChEBI" id="CHEBI:128753"/>
    </ligand>
</feature>
<feature type="binding site" evidence="1">
    <location>
        <position position="198"/>
    </location>
    <ligand>
        <name>[4Fe-4S] cluster</name>
        <dbReference type="ChEBI" id="CHEBI:49883"/>
    </ligand>
</feature>
<feature type="binding site" evidence="1">
    <location>
        <position position="226"/>
    </location>
    <ligand>
        <name>(2E)-4-hydroxy-3-methylbut-2-enyl diphosphate</name>
        <dbReference type="ChEBI" id="CHEBI:128753"/>
    </ligand>
</feature>
<feature type="binding site" evidence="1">
    <location>
        <position position="226"/>
    </location>
    <ligand>
        <name>dimethylallyl diphosphate</name>
        <dbReference type="ChEBI" id="CHEBI:57623"/>
    </ligand>
</feature>
<feature type="binding site" evidence="1">
    <location>
        <position position="226"/>
    </location>
    <ligand>
        <name>isopentenyl diphosphate</name>
        <dbReference type="ChEBI" id="CHEBI:128769"/>
    </ligand>
</feature>
<feature type="binding site" evidence="1">
    <location>
        <position position="227"/>
    </location>
    <ligand>
        <name>(2E)-4-hydroxy-3-methylbut-2-enyl diphosphate</name>
        <dbReference type="ChEBI" id="CHEBI:128753"/>
    </ligand>
</feature>
<feature type="binding site" evidence="1">
    <location>
        <position position="227"/>
    </location>
    <ligand>
        <name>dimethylallyl diphosphate</name>
        <dbReference type="ChEBI" id="CHEBI:57623"/>
    </ligand>
</feature>
<feature type="binding site" evidence="1">
    <location>
        <position position="227"/>
    </location>
    <ligand>
        <name>isopentenyl diphosphate</name>
        <dbReference type="ChEBI" id="CHEBI:128769"/>
    </ligand>
</feature>
<feature type="binding site" evidence="1">
    <location>
        <position position="228"/>
    </location>
    <ligand>
        <name>(2E)-4-hydroxy-3-methylbut-2-enyl diphosphate</name>
        <dbReference type="ChEBI" id="CHEBI:128753"/>
    </ligand>
</feature>
<feature type="binding site" evidence="1">
    <location>
        <position position="228"/>
    </location>
    <ligand>
        <name>dimethylallyl diphosphate</name>
        <dbReference type="ChEBI" id="CHEBI:57623"/>
    </ligand>
</feature>
<feature type="binding site" evidence="1">
    <location>
        <position position="228"/>
    </location>
    <ligand>
        <name>isopentenyl diphosphate</name>
        <dbReference type="ChEBI" id="CHEBI:128769"/>
    </ligand>
</feature>
<feature type="binding site" evidence="1">
    <location>
        <position position="270"/>
    </location>
    <ligand>
        <name>(2E)-4-hydroxy-3-methylbut-2-enyl diphosphate</name>
        <dbReference type="ChEBI" id="CHEBI:128753"/>
    </ligand>
</feature>
<feature type="binding site" evidence="1">
    <location>
        <position position="270"/>
    </location>
    <ligand>
        <name>dimethylallyl diphosphate</name>
        <dbReference type="ChEBI" id="CHEBI:57623"/>
    </ligand>
</feature>
<feature type="binding site" evidence="1">
    <location>
        <position position="270"/>
    </location>
    <ligand>
        <name>isopentenyl diphosphate</name>
        <dbReference type="ChEBI" id="CHEBI:128769"/>
    </ligand>
</feature>
<sequence length="322" mass="35322">MNEKTIILANPRGFCAGVDRAISIVERALEEFGAPIYVRHEVVHNKFVVDNLREKGAVFIEDLAEVPPGATLVYSAHGVSKAVRQEAAERGFRVFDATCPLVTKVHKEVARLDAQDCEIIMIGHKGHVEVEGTMGQLAPGKMLLVETVGDVAKLEVRNPDKLAYVSQTTLSVDETKDIIAALNARFPNIRNPHKEDICYATTNRQTAVKELAEQCDIVIVVGSPNSSNSNRLREVAASRGIDAYMVDNAGYLQRAWFEGKNKVGVTAGASAPEVLVREVLATIRGWGHETVREGEGAEESIVFVLPKELRREGETKPDLCKR</sequence>
<protein>
    <recommendedName>
        <fullName evidence="1">4-hydroxy-3-methylbut-2-enyl diphosphate reductase</fullName>
        <shortName evidence="1">HMBPP reductase</shortName>
        <ecNumber evidence="1">1.17.7.4</ecNumber>
    </recommendedName>
</protein>
<accession>A1KS64</accession>
<evidence type="ECO:0000255" key="1">
    <source>
        <dbReference type="HAMAP-Rule" id="MF_00191"/>
    </source>
</evidence>
<proteinExistence type="inferred from homology"/>
<name>ISPH_NEIMF</name>
<comment type="function">
    <text evidence="1">Catalyzes the conversion of 1-hydroxy-2-methyl-2-(E)-butenyl 4-diphosphate (HMBPP) into a mixture of isopentenyl diphosphate (IPP) and dimethylallyl diphosphate (DMAPP). Acts in the terminal step of the DOXP/MEP pathway for isoprenoid precursor biosynthesis.</text>
</comment>
<comment type="catalytic activity">
    <reaction evidence="1">
        <text>isopentenyl diphosphate + 2 oxidized [2Fe-2S]-[ferredoxin] + H2O = (2E)-4-hydroxy-3-methylbut-2-enyl diphosphate + 2 reduced [2Fe-2S]-[ferredoxin] + 2 H(+)</text>
        <dbReference type="Rhea" id="RHEA:24488"/>
        <dbReference type="Rhea" id="RHEA-COMP:10000"/>
        <dbReference type="Rhea" id="RHEA-COMP:10001"/>
        <dbReference type="ChEBI" id="CHEBI:15377"/>
        <dbReference type="ChEBI" id="CHEBI:15378"/>
        <dbReference type="ChEBI" id="CHEBI:33737"/>
        <dbReference type="ChEBI" id="CHEBI:33738"/>
        <dbReference type="ChEBI" id="CHEBI:128753"/>
        <dbReference type="ChEBI" id="CHEBI:128769"/>
        <dbReference type="EC" id="1.17.7.4"/>
    </reaction>
</comment>
<comment type="catalytic activity">
    <reaction evidence="1">
        <text>dimethylallyl diphosphate + 2 oxidized [2Fe-2S]-[ferredoxin] + H2O = (2E)-4-hydroxy-3-methylbut-2-enyl diphosphate + 2 reduced [2Fe-2S]-[ferredoxin] + 2 H(+)</text>
        <dbReference type="Rhea" id="RHEA:24825"/>
        <dbReference type="Rhea" id="RHEA-COMP:10000"/>
        <dbReference type="Rhea" id="RHEA-COMP:10001"/>
        <dbReference type="ChEBI" id="CHEBI:15377"/>
        <dbReference type="ChEBI" id="CHEBI:15378"/>
        <dbReference type="ChEBI" id="CHEBI:33737"/>
        <dbReference type="ChEBI" id="CHEBI:33738"/>
        <dbReference type="ChEBI" id="CHEBI:57623"/>
        <dbReference type="ChEBI" id="CHEBI:128753"/>
        <dbReference type="EC" id="1.17.7.4"/>
    </reaction>
</comment>
<comment type="cofactor">
    <cofactor evidence="1">
        <name>[4Fe-4S] cluster</name>
        <dbReference type="ChEBI" id="CHEBI:49883"/>
    </cofactor>
    <text evidence="1">Binds 1 [4Fe-4S] cluster per subunit.</text>
</comment>
<comment type="pathway">
    <text evidence="1">Isoprenoid biosynthesis; dimethylallyl diphosphate biosynthesis; dimethylallyl diphosphate from (2E)-4-hydroxy-3-methylbutenyl diphosphate: step 1/1.</text>
</comment>
<comment type="pathway">
    <text evidence="1">Isoprenoid biosynthesis; isopentenyl diphosphate biosynthesis via DXP pathway; isopentenyl diphosphate from 1-deoxy-D-xylulose 5-phosphate: step 6/6.</text>
</comment>
<comment type="similarity">
    <text evidence="1">Belongs to the IspH family.</text>
</comment>
<gene>
    <name evidence="1" type="primary">ispH</name>
    <name type="ordered locus">NMC0385</name>
</gene>
<organism>
    <name type="scientific">Neisseria meningitidis serogroup C / serotype 2a (strain ATCC 700532 / DSM 15464 / FAM18)</name>
    <dbReference type="NCBI Taxonomy" id="272831"/>
    <lineage>
        <taxon>Bacteria</taxon>
        <taxon>Pseudomonadati</taxon>
        <taxon>Pseudomonadota</taxon>
        <taxon>Betaproteobacteria</taxon>
        <taxon>Neisseriales</taxon>
        <taxon>Neisseriaceae</taxon>
        <taxon>Neisseria</taxon>
    </lineage>
</organism>
<reference key="1">
    <citation type="journal article" date="2007" name="PLoS Genet.">
        <title>Meningococcal genetic variation mechanisms viewed through comparative analysis of serogroup C strain FAM18.</title>
        <authorList>
            <person name="Bentley S.D."/>
            <person name="Vernikos G.S."/>
            <person name="Snyder L.A.S."/>
            <person name="Churcher C."/>
            <person name="Arrowsmith C."/>
            <person name="Chillingworth T."/>
            <person name="Cronin A."/>
            <person name="Davis P.H."/>
            <person name="Holroyd N.E."/>
            <person name="Jagels K."/>
            <person name="Maddison M."/>
            <person name="Moule S."/>
            <person name="Rabbinowitsch E."/>
            <person name="Sharp S."/>
            <person name="Unwin L."/>
            <person name="Whitehead S."/>
            <person name="Quail M.A."/>
            <person name="Achtman M."/>
            <person name="Barrell B.G."/>
            <person name="Saunders N.J."/>
            <person name="Parkhill J."/>
        </authorList>
    </citation>
    <scope>NUCLEOTIDE SEQUENCE [LARGE SCALE GENOMIC DNA]</scope>
    <source>
        <strain>ATCC 700532 / DSM 15464 / FAM18</strain>
    </source>
</reference>